<reference key="1">
    <citation type="journal article" date="1997" name="Dev. Biol.">
        <title>Regulation of paraxis expression and somite formation by ectoderm- and neural tube-derived signals.</title>
        <authorList>
            <person name="Sosic D."/>
            <person name="Brand-Saberi B."/>
            <person name="Schmidt C."/>
            <person name="Christ B."/>
            <person name="Olson E.N."/>
        </authorList>
    </citation>
    <scope>NUCLEOTIDE SEQUENCE [MRNA]</scope>
    <scope>DEVELOPMENTAL STAGE</scope>
    <scope>INDUCTION</scope>
    <source>
        <tissue>Embryo</tissue>
    </source>
</reference>
<reference key="2">
    <citation type="journal article" date="1997" name="Dev. Biol.">
        <title>Cloning and characterization of chicken Paraxis: a regulator of paraxial mesoderm development and somite formation.</title>
        <authorList>
            <person name="Barnes G.L."/>
            <person name="Alexander P.G."/>
            <person name="Hsu C.W."/>
            <person name="Mariani B.D."/>
            <person name="Tuan R.S."/>
        </authorList>
    </citation>
    <scope>NUCLEOTIDE SEQUENCE [MRNA]</scope>
    <scope>DEVELOPMENTAL STAGE</scope>
    <source>
        <tissue>Embryo</tissue>
    </source>
</reference>
<proteinExistence type="evidence at transcript level"/>
<name>TCF15_CHICK</name>
<dbReference type="EMBL" id="U76665">
    <property type="protein sequence ID" value="AAC60208.1"/>
    <property type="molecule type" value="mRNA"/>
</dbReference>
<dbReference type="EMBL" id="U72641">
    <property type="protein sequence ID" value="AAB41698.1"/>
    <property type="molecule type" value="mRNA"/>
</dbReference>
<dbReference type="RefSeq" id="NP_990277.1">
    <property type="nucleotide sequence ID" value="NM_204946.2"/>
</dbReference>
<dbReference type="SMR" id="P79782"/>
<dbReference type="FunCoup" id="P79782">
    <property type="interactions" value="74"/>
</dbReference>
<dbReference type="STRING" id="9031.ENSGALP00000040766"/>
<dbReference type="PaxDb" id="9031-ENSGALP00000040766"/>
<dbReference type="GeneID" id="395788"/>
<dbReference type="KEGG" id="gga:395788"/>
<dbReference type="CTD" id="6939"/>
<dbReference type="VEuPathDB" id="HostDB:geneid_395788"/>
<dbReference type="eggNOG" id="KOG4029">
    <property type="taxonomic scope" value="Eukaryota"/>
</dbReference>
<dbReference type="InParanoid" id="P79782"/>
<dbReference type="OrthoDB" id="6106870at2759"/>
<dbReference type="PhylomeDB" id="P79782"/>
<dbReference type="PRO" id="PR:P79782"/>
<dbReference type="Proteomes" id="UP000000539">
    <property type="component" value="Unassembled WGS sequence"/>
</dbReference>
<dbReference type="GO" id="GO:0005634">
    <property type="term" value="C:nucleus"/>
    <property type="evidence" value="ECO:0000250"/>
    <property type="project" value="UniProtKB"/>
</dbReference>
<dbReference type="GO" id="GO:0000981">
    <property type="term" value="F:DNA-binding transcription factor activity, RNA polymerase II-specific"/>
    <property type="evidence" value="ECO:0000250"/>
    <property type="project" value="UniProtKB"/>
</dbReference>
<dbReference type="GO" id="GO:0070888">
    <property type="term" value="F:E-box binding"/>
    <property type="evidence" value="ECO:0000250"/>
    <property type="project" value="UniProtKB"/>
</dbReference>
<dbReference type="GO" id="GO:0046983">
    <property type="term" value="F:protein dimerization activity"/>
    <property type="evidence" value="ECO:0007669"/>
    <property type="project" value="InterPro"/>
</dbReference>
<dbReference type="GO" id="GO:0000977">
    <property type="term" value="F:RNA polymerase II transcription regulatory region sequence-specific DNA binding"/>
    <property type="evidence" value="ECO:0000318"/>
    <property type="project" value="GO_Central"/>
</dbReference>
<dbReference type="GO" id="GO:0030154">
    <property type="term" value="P:cell differentiation"/>
    <property type="evidence" value="ECO:0007669"/>
    <property type="project" value="UniProtKB-KW"/>
</dbReference>
<dbReference type="GO" id="GO:0032502">
    <property type="term" value="P:developmental process"/>
    <property type="evidence" value="ECO:0000318"/>
    <property type="project" value="GO_Central"/>
</dbReference>
<dbReference type="GO" id="GO:1902037">
    <property type="term" value="P:negative regulation of hematopoietic stem cell differentiation"/>
    <property type="evidence" value="ECO:0000250"/>
    <property type="project" value="UniProtKB"/>
</dbReference>
<dbReference type="GO" id="GO:2000738">
    <property type="term" value="P:positive regulation of stem cell differentiation"/>
    <property type="evidence" value="ECO:0000250"/>
    <property type="project" value="UniProtKB"/>
</dbReference>
<dbReference type="GO" id="GO:0045944">
    <property type="term" value="P:positive regulation of transcription by RNA polymerase II"/>
    <property type="evidence" value="ECO:0000250"/>
    <property type="project" value="UniProtKB"/>
</dbReference>
<dbReference type="GO" id="GO:0006357">
    <property type="term" value="P:regulation of transcription by RNA polymerase II"/>
    <property type="evidence" value="ECO:0000318"/>
    <property type="project" value="GO_Central"/>
</dbReference>
<dbReference type="GO" id="GO:0019827">
    <property type="term" value="P:stem cell population maintenance"/>
    <property type="evidence" value="ECO:0000250"/>
    <property type="project" value="UniProtKB"/>
</dbReference>
<dbReference type="CDD" id="cd11470">
    <property type="entry name" value="bHLH_TS_TCF15_paraxis"/>
    <property type="match status" value="1"/>
</dbReference>
<dbReference type="FunFam" id="4.10.280.10:FF:000010">
    <property type="entry name" value="Scleraxis bHLH transcription factor"/>
    <property type="match status" value="1"/>
</dbReference>
<dbReference type="Gene3D" id="4.10.280.10">
    <property type="entry name" value="Helix-loop-helix DNA-binding domain"/>
    <property type="match status" value="1"/>
</dbReference>
<dbReference type="InterPro" id="IPR011598">
    <property type="entry name" value="bHLH_dom"/>
</dbReference>
<dbReference type="InterPro" id="IPR050283">
    <property type="entry name" value="E-box_TF_Regulators"/>
</dbReference>
<dbReference type="InterPro" id="IPR036638">
    <property type="entry name" value="HLH_DNA-bd_sf"/>
</dbReference>
<dbReference type="PANTHER" id="PTHR23349">
    <property type="entry name" value="BASIC HELIX-LOOP-HELIX TRANSCRIPTION FACTOR, TWIST"/>
    <property type="match status" value="1"/>
</dbReference>
<dbReference type="PANTHER" id="PTHR23349:SF4">
    <property type="entry name" value="TRANSCRIPTION FACTOR 15"/>
    <property type="match status" value="1"/>
</dbReference>
<dbReference type="Pfam" id="PF00010">
    <property type="entry name" value="HLH"/>
    <property type="match status" value="1"/>
</dbReference>
<dbReference type="SMART" id="SM00353">
    <property type="entry name" value="HLH"/>
    <property type="match status" value="1"/>
</dbReference>
<dbReference type="SUPFAM" id="SSF47459">
    <property type="entry name" value="HLH, helix-loop-helix DNA-binding domain"/>
    <property type="match status" value="1"/>
</dbReference>
<dbReference type="PROSITE" id="PS50888">
    <property type="entry name" value="BHLH"/>
    <property type="match status" value="1"/>
</dbReference>
<evidence type="ECO:0000250" key="1">
    <source>
        <dbReference type="UniProtKB" id="Q60756"/>
    </source>
</evidence>
<evidence type="ECO:0000255" key="2">
    <source>
        <dbReference type="PROSITE-ProRule" id="PRU00981"/>
    </source>
</evidence>
<evidence type="ECO:0000256" key="3">
    <source>
        <dbReference type="SAM" id="MobiDB-lite"/>
    </source>
</evidence>
<evidence type="ECO:0000269" key="4">
    <source>
    </source>
</evidence>
<evidence type="ECO:0000269" key="5">
    <source>
    </source>
</evidence>
<evidence type="ECO:0000303" key="6">
    <source>
    </source>
</evidence>
<evidence type="ECO:0000303" key="7">
    <source>
    </source>
</evidence>
<evidence type="ECO:0000305" key="8"/>
<feature type="chain" id="PRO_0000127463" description="Transcription factor 15">
    <location>
        <begin position="1"/>
        <end position="183"/>
    </location>
</feature>
<feature type="domain" description="bHLH" evidence="2">
    <location>
        <begin position="61"/>
        <end position="113"/>
    </location>
</feature>
<feature type="region of interest" description="Disordered" evidence="3">
    <location>
        <begin position="24"/>
        <end position="46"/>
    </location>
</feature>
<feature type="sequence conflict" description="In Ref. 1; AAC60208." evidence="8" ref="1">
    <original>R</original>
    <variation>G</variation>
    <location>
        <position position="48"/>
    </location>
</feature>
<feature type="sequence conflict" description="In Ref. 2; AAB41698." evidence="8" ref="2">
    <original>K</original>
    <variation>R</variation>
    <location>
        <position position="61"/>
    </location>
</feature>
<feature type="sequence conflict" description="In Ref. 1; AAC60208." evidence="8" ref="1">
    <original>A</original>
    <variation>S</variation>
    <location>
        <position position="111"/>
    </location>
</feature>
<feature type="sequence conflict" description="In Ref. 1; AAC60208." evidence="8" ref="1">
    <original>A</original>
    <variation>S</variation>
    <location>
        <position position="132"/>
    </location>
</feature>
<feature type="sequence conflict" description="In Ref. 1; AAC60208." evidence="8" ref="1">
    <original>GR</original>
    <variation>SK</variation>
    <location>
        <begin position="142"/>
        <end position="143"/>
    </location>
</feature>
<feature type="sequence conflict" description="In Ref. 2; AAB41698." evidence="8" ref="2">
    <original>CTFCLSNQR</original>
    <variation>WTFYFNNHG</variation>
    <location>
        <begin position="149"/>
        <end position="157"/>
    </location>
</feature>
<feature type="sequence conflict" description="In Ref. 2; AAB41698." evidence="8" ref="2">
    <original>G</original>
    <variation>V</variation>
    <location>
        <position position="161"/>
    </location>
</feature>
<feature type="sequence conflict" description="In Ref. 2; AAB41698." evidence="8" ref="2">
    <original>LGG</original>
    <variation>HGD</variation>
    <location>
        <begin position="165"/>
        <end position="167"/>
    </location>
</feature>
<feature type="sequence conflict" description="In Ref. 2; AAB41698." evidence="8" ref="2">
    <original>VA</original>
    <variation>GN</variation>
    <location>
        <begin position="180"/>
        <end position="181"/>
    </location>
</feature>
<comment type="function">
    <text evidence="1">Early transcription factor that plays a key role in somitogenesis, paraxial mesoderm development and regulation of stem cell pluripotency. Essential for the mesenchymal to epithelial transition associated with somite formation. Required for somite morphogenesis, thereby regulating patterning of the axial skeleton and skeletal muscles. Also plays a key role in regulation of stem cell pluripotency. Promotes pluripotency exit of embryonic stem cells (ESCs) by priming ESCs for differentiation. Acts as a key regulator of self-renewal of hematopoietic stem cells (HSCs) by mediating HSCs quiescence and long-term self-renewal. Acts by forming a heterodimer with another helix-loop-helix (bHLH) protein, that binds DNA on E-box motifs (5'-CANNTG-3') and activates transcription of target genes.</text>
</comment>
<comment type="subunit">
    <text evidence="1">Heterodimer; efficient DNA binding requires dimerization with another bHLH protein.</text>
</comment>
<comment type="subcellular location">
    <subcellularLocation>
        <location evidence="1 2">Nucleus</location>
    </subcellularLocation>
</comment>
<comment type="developmental stage">
    <text evidence="4 5">First detected in a subpopulation of cells lateral to the primitive streak corresponding with the area of prospective segmental plate mesoderm and somites (PubMed:9187085, PubMed:9281340). Later in development, it is expressed throughout the segmental plate and newly formed somites and is restricted to the paraxial mesoderm (PubMed:9187085, PubMed:9281340). After somite formation, its expression decline in the lateral region of the somite (PubMed:9187085, PubMed:9281340). Later it is expressed at highest levels at the cranial and caudal edges of the more mature somites (PubMed:9187085, PubMed:9281340). As the dermomyotome and sclerotome formed, expression disappeared from the ventral regions of the somite, but persisted in the dermomyotome (PubMed:9187085, PubMed:9281340). When the dermomyotome developed further into the dermatome and myotome, expression is detected in both compartments, although more prominently in the dermatome (PubMed:9187085, PubMed:9281340). Expression was also detected in migrating precursors of tongue muscle and in the limb buds (PubMed:9187085, PubMed:9281340).</text>
</comment>
<comment type="induction">
    <text evidence="4">Surface ectoderm and neural tube are the sources of inductive signals required for gene expression and for somite formation.</text>
</comment>
<gene>
    <name type="primary">TCF15</name>
    <name evidence="1" type="synonym">BHLHEC2</name>
</gene>
<keyword id="KW-0010">Activator</keyword>
<keyword id="KW-0217">Developmental protein</keyword>
<keyword id="KW-0221">Differentiation</keyword>
<keyword id="KW-0238">DNA-binding</keyword>
<keyword id="KW-0539">Nucleus</keyword>
<keyword id="KW-1185">Reference proteome</keyword>
<keyword id="KW-0804">Transcription</keyword>
<keyword id="KW-0805">Transcription regulation</keyword>
<organism>
    <name type="scientific">Gallus gallus</name>
    <name type="common">Chicken</name>
    <dbReference type="NCBI Taxonomy" id="9031"/>
    <lineage>
        <taxon>Eukaryota</taxon>
        <taxon>Metazoa</taxon>
        <taxon>Chordata</taxon>
        <taxon>Craniata</taxon>
        <taxon>Vertebrata</taxon>
        <taxon>Euteleostomi</taxon>
        <taxon>Archelosauria</taxon>
        <taxon>Archosauria</taxon>
        <taxon>Dinosauria</taxon>
        <taxon>Saurischia</taxon>
        <taxon>Theropoda</taxon>
        <taxon>Coelurosauria</taxon>
        <taxon>Aves</taxon>
        <taxon>Neognathae</taxon>
        <taxon>Galloanserae</taxon>
        <taxon>Galliformes</taxon>
        <taxon>Phasianidae</taxon>
        <taxon>Phasianinae</taxon>
        <taxon>Gallus</taxon>
    </lineage>
</organism>
<protein>
    <recommendedName>
        <fullName>Transcription factor 15</fullName>
        <shortName>TCF-15</shortName>
    </recommendedName>
    <alternativeName>
        <fullName evidence="6 7">Paraxis</fullName>
    </alternativeName>
    <alternativeName>
        <fullName evidence="1">Protein bHLH-EC2</fullName>
    </alternativeName>
</protein>
<accession>P79782</accession>
<accession>O13112</accession>
<sequence>MAFTMLRPMAARVLYPDIGMLSEDEENRSESDTSDQSYGCCEGAEARRKVPRKTGPMVMVKQRQAANARERDRTQSVNTAFTALRTLIPTEPVDRKLSKIETLRLASSYIAHLANVLLLGEGCEDGQPCFSAIYGAKGDLDGRQPRSICTFCLSNQRKGGGRRDLGGNCLKVRGVTPLRVARR</sequence>